<accession>C3K860</accession>
<dbReference type="EMBL" id="AM181176">
    <property type="protein sequence ID" value="CAY47371.1"/>
    <property type="molecule type" value="Genomic_DNA"/>
</dbReference>
<dbReference type="RefSeq" id="WP_012722447.1">
    <property type="nucleotide sequence ID" value="NC_012660.1"/>
</dbReference>
<dbReference type="SMR" id="C3K860"/>
<dbReference type="PATRIC" id="fig|216595.4.peg.1342"/>
<dbReference type="eggNOG" id="COG0254">
    <property type="taxonomic scope" value="Bacteria"/>
</dbReference>
<dbReference type="HOGENOM" id="CLU_114306_2_2_6"/>
<dbReference type="OrthoDB" id="9803251at2"/>
<dbReference type="GO" id="GO:1990904">
    <property type="term" value="C:ribonucleoprotein complex"/>
    <property type="evidence" value="ECO:0007669"/>
    <property type="project" value="UniProtKB-KW"/>
</dbReference>
<dbReference type="GO" id="GO:0005840">
    <property type="term" value="C:ribosome"/>
    <property type="evidence" value="ECO:0007669"/>
    <property type="project" value="UniProtKB-KW"/>
</dbReference>
<dbReference type="GO" id="GO:0003735">
    <property type="term" value="F:structural constituent of ribosome"/>
    <property type="evidence" value="ECO:0007669"/>
    <property type="project" value="InterPro"/>
</dbReference>
<dbReference type="GO" id="GO:0006412">
    <property type="term" value="P:translation"/>
    <property type="evidence" value="ECO:0007669"/>
    <property type="project" value="UniProtKB-UniRule"/>
</dbReference>
<dbReference type="Gene3D" id="4.10.830.30">
    <property type="entry name" value="Ribosomal protein L31"/>
    <property type="match status" value="1"/>
</dbReference>
<dbReference type="HAMAP" id="MF_00502">
    <property type="entry name" value="Ribosomal_bL31_2"/>
    <property type="match status" value="1"/>
</dbReference>
<dbReference type="InterPro" id="IPR034704">
    <property type="entry name" value="Ribosomal_bL28/bL31-like_sf"/>
</dbReference>
<dbReference type="InterPro" id="IPR002150">
    <property type="entry name" value="Ribosomal_bL31"/>
</dbReference>
<dbReference type="InterPro" id="IPR027493">
    <property type="entry name" value="Ribosomal_bL31_B"/>
</dbReference>
<dbReference type="InterPro" id="IPR042105">
    <property type="entry name" value="Ribosomal_bL31_sf"/>
</dbReference>
<dbReference type="NCBIfam" id="TIGR00105">
    <property type="entry name" value="L31"/>
    <property type="match status" value="1"/>
</dbReference>
<dbReference type="NCBIfam" id="NF002462">
    <property type="entry name" value="PRK01678.1"/>
    <property type="match status" value="1"/>
</dbReference>
<dbReference type="PANTHER" id="PTHR33280">
    <property type="entry name" value="50S RIBOSOMAL PROTEIN L31, CHLOROPLASTIC"/>
    <property type="match status" value="1"/>
</dbReference>
<dbReference type="PANTHER" id="PTHR33280:SF1">
    <property type="entry name" value="LARGE RIBOSOMAL SUBUNIT PROTEIN BL31C"/>
    <property type="match status" value="1"/>
</dbReference>
<dbReference type="Pfam" id="PF01197">
    <property type="entry name" value="Ribosomal_L31"/>
    <property type="match status" value="1"/>
</dbReference>
<dbReference type="PRINTS" id="PR01249">
    <property type="entry name" value="RIBOSOMALL31"/>
</dbReference>
<dbReference type="SUPFAM" id="SSF143800">
    <property type="entry name" value="L28p-like"/>
    <property type="match status" value="1"/>
</dbReference>
<keyword id="KW-0687">Ribonucleoprotein</keyword>
<keyword id="KW-0689">Ribosomal protein</keyword>
<proteinExistence type="inferred from homology"/>
<feature type="chain" id="PRO_1000206535" description="Large ribosomal subunit protein bL31B">
    <location>
        <begin position="1"/>
        <end position="90"/>
    </location>
</feature>
<gene>
    <name evidence="1" type="primary">rpmE2</name>
    <name type="ordered locus">PFLU_1108</name>
</gene>
<comment type="subunit">
    <text evidence="1">Part of the 50S ribosomal subunit.</text>
</comment>
<comment type="similarity">
    <text evidence="1">Belongs to the bacterial ribosomal protein bL31 family. Type B subfamily.</text>
</comment>
<organism>
    <name type="scientific">Pseudomonas fluorescens (strain SBW25)</name>
    <dbReference type="NCBI Taxonomy" id="216595"/>
    <lineage>
        <taxon>Bacteria</taxon>
        <taxon>Pseudomonadati</taxon>
        <taxon>Pseudomonadota</taxon>
        <taxon>Gammaproteobacteria</taxon>
        <taxon>Pseudomonadales</taxon>
        <taxon>Pseudomonadaceae</taxon>
        <taxon>Pseudomonas</taxon>
    </lineage>
</organism>
<name>RL31B_PSEFS</name>
<reference key="1">
    <citation type="journal article" date="2009" name="Genome Biol.">
        <title>Genomic and genetic analyses of diversity and plant interactions of Pseudomonas fluorescens.</title>
        <authorList>
            <person name="Silby M.W."/>
            <person name="Cerdeno-Tarraga A.M."/>
            <person name="Vernikos G.S."/>
            <person name="Giddens S.R."/>
            <person name="Jackson R.W."/>
            <person name="Preston G.M."/>
            <person name="Zhang X.-X."/>
            <person name="Moon C.D."/>
            <person name="Gehrig S.M."/>
            <person name="Godfrey S.A.C."/>
            <person name="Knight C.G."/>
            <person name="Malone J.G."/>
            <person name="Robinson Z."/>
            <person name="Spiers A.J."/>
            <person name="Harris S."/>
            <person name="Challis G.L."/>
            <person name="Yaxley A.M."/>
            <person name="Harris D."/>
            <person name="Seeger K."/>
            <person name="Murphy L."/>
            <person name="Rutter S."/>
            <person name="Squares R."/>
            <person name="Quail M.A."/>
            <person name="Saunders E."/>
            <person name="Mavromatis K."/>
            <person name="Brettin T.S."/>
            <person name="Bentley S.D."/>
            <person name="Hothersall J."/>
            <person name="Stephens E."/>
            <person name="Thomas C.M."/>
            <person name="Parkhill J."/>
            <person name="Levy S.B."/>
            <person name="Rainey P.B."/>
            <person name="Thomson N.R."/>
        </authorList>
    </citation>
    <scope>NUCLEOTIDE SEQUENCE [LARGE SCALE GENOMIC DNA]</scope>
    <source>
        <strain>SBW25</strain>
    </source>
</reference>
<sequence>MKAGIHPDYRTVLFHDTAADVFFLIGSTADSDRTHVHSDGNTYPYIPLDVSSASHPIYTGQQRKTQVEGRIAGFNKRFASFGSGAKKAEE</sequence>
<evidence type="ECO:0000255" key="1">
    <source>
        <dbReference type="HAMAP-Rule" id="MF_00502"/>
    </source>
</evidence>
<evidence type="ECO:0000305" key="2"/>
<protein>
    <recommendedName>
        <fullName evidence="1">Large ribosomal subunit protein bL31B</fullName>
    </recommendedName>
    <alternativeName>
        <fullName evidence="2">50S ribosomal protein L31 type B</fullName>
    </alternativeName>
</protein>